<name>NH2L1_XENTR</name>
<reference key="1">
    <citation type="submission" date="2006-10" db="EMBL/GenBank/DDBJ databases">
        <authorList>
            <consortium name="Sanger Xenopus tropicalis EST/cDNA project"/>
        </authorList>
    </citation>
    <scope>NUCLEOTIDE SEQUENCE [LARGE SCALE MRNA]</scope>
    <source>
        <tissue>Gastrula</tissue>
        <tissue>Neurula</tissue>
    </source>
</reference>
<reference key="2">
    <citation type="submission" date="2003-11" db="EMBL/GenBank/DDBJ databases">
        <authorList>
            <consortium name="NIH - Xenopus Gene Collection (XGC) project"/>
        </authorList>
    </citation>
    <scope>NUCLEOTIDE SEQUENCE [LARGE SCALE MRNA]</scope>
    <source>
        <tissue>Embryo</tissue>
    </source>
</reference>
<gene>
    <name evidence="1" type="primary">snu13</name>
    <name type="synonym">nhp2l1</name>
    <name type="ORF">TGas123b15.1</name>
    <name type="ORF">TNeu005n20.1</name>
</gene>
<organism>
    <name type="scientific">Xenopus tropicalis</name>
    <name type="common">Western clawed frog</name>
    <name type="synonym">Silurana tropicalis</name>
    <dbReference type="NCBI Taxonomy" id="8364"/>
    <lineage>
        <taxon>Eukaryota</taxon>
        <taxon>Metazoa</taxon>
        <taxon>Chordata</taxon>
        <taxon>Craniata</taxon>
        <taxon>Vertebrata</taxon>
        <taxon>Euteleostomi</taxon>
        <taxon>Amphibia</taxon>
        <taxon>Batrachia</taxon>
        <taxon>Anura</taxon>
        <taxon>Pipoidea</taxon>
        <taxon>Pipidae</taxon>
        <taxon>Xenopodinae</taxon>
        <taxon>Xenopus</taxon>
        <taxon>Silurana</taxon>
    </lineage>
</organism>
<evidence type="ECO:0000250" key="1">
    <source>
        <dbReference type="UniProtKB" id="P55769"/>
    </source>
</evidence>
<evidence type="ECO:0000305" key="2"/>
<protein>
    <recommendedName>
        <fullName>NHP2-like protein 1</fullName>
    </recommendedName>
    <alternativeName>
        <fullName>High mobility group-like nuclear protein 2 homolog 1</fullName>
    </alternativeName>
    <alternativeName>
        <fullName evidence="1">U4/U6.U5 small nuclear ribonucleoprotein SNU13</fullName>
    </alternativeName>
    <alternativeName>
        <fullName>U4/U6.U5 tri-snRNP 15.5 kDa protein</fullName>
    </alternativeName>
</protein>
<feature type="chain" id="PRO_0000320041" description="NHP2-like protein 1">
    <location>
        <begin position="1"/>
        <end position="128"/>
    </location>
</feature>
<feature type="region of interest" description="Interaction with U4 snRNA and U4atac snRNA" evidence="1">
    <location>
        <begin position="36"/>
        <end position="48"/>
    </location>
</feature>
<feature type="region of interest" description="Important for U4 snRNA-binding" evidence="1">
    <location>
        <begin position="96"/>
        <end position="128"/>
    </location>
</feature>
<feature type="site" description="Interaction with U4 snRNA and U4atac snRNA" evidence="1">
    <location>
        <position position="61"/>
    </location>
</feature>
<feature type="site" description="Interaction with U4 snRNA and U4atac snRNA" evidence="1">
    <location>
        <position position="86"/>
    </location>
</feature>
<dbReference type="EMBL" id="CR760372">
    <property type="protein sequence ID" value="CAJ83019.1"/>
    <property type="molecule type" value="mRNA"/>
</dbReference>
<dbReference type="EMBL" id="CR761482">
    <property type="protein sequence ID" value="CAJ83900.1"/>
    <property type="molecule type" value="mRNA"/>
</dbReference>
<dbReference type="EMBL" id="BC061279">
    <property type="protein sequence ID" value="AAH61279.1"/>
    <property type="molecule type" value="mRNA"/>
</dbReference>
<dbReference type="RefSeq" id="NP_988994.1">
    <property type="nucleotide sequence ID" value="NM_203663.1"/>
</dbReference>
<dbReference type="SMR" id="Q6P8E9"/>
<dbReference type="FunCoup" id="Q6P8E9">
    <property type="interactions" value="2523"/>
</dbReference>
<dbReference type="STRING" id="8364.ENSXETP00000012275"/>
<dbReference type="PaxDb" id="8364-ENSXETP00000055093"/>
<dbReference type="DNASU" id="394590"/>
<dbReference type="GeneID" id="394590"/>
<dbReference type="KEGG" id="xtr:394590"/>
<dbReference type="AGR" id="Xenbase:XB-GENE-963821"/>
<dbReference type="CTD" id="4809"/>
<dbReference type="eggNOG" id="KOG3387">
    <property type="taxonomic scope" value="Eukaryota"/>
</dbReference>
<dbReference type="HOGENOM" id="CLU_084513_4_1_1"/>
<dbReference type="InParanoid" id="Q6P8E9"/>
<dbReference type="OMA" id="IKNQIYA"/>
<dbReference type="OrthoDB" id="1924699at2759"/>
<dbReference type="PhylomeDB" id="Q6P8E9"/>
<dbReference type="TreeFam" id="TF300184"/>
<dbReference type="Proteomes" id="UP000008143">
    <property type="component" value="Chromosome 4"/>
</dbReference>
<dbReference type="Bgee" id="ENSXETG00000026024">
    <property type="expression patterns" value="Expressed in gastrula and 13 other cell types or tissues"/>
</dbReference>
<dbReference type="GO" id="GO:0005730">
    <property type="term" value="C:nucleolus"/>
    <property type="evidence" value="ECO:0007669"/>
    <property type="project" value="UniProtKB-SubCell"/>
</dbReference>
<dbReference type="GO" id="GO:0005634">
    <property type="term" value="C:nucleus"/>
    <property type="evidence" value="ECO:0000250"/>
    <property type="project" value="UniProtKB"/>
</dbReference>
<dbReference type="GO" id="GO:0032040">
    <property type="term" value="C:small-subunit processome"/>
    <property type="evidence" value="ECO:0000250"/>
    <property type="project" value="UniProtKB"/>
</dbReference>
<dbReference type="GO" id="GO:0071005">
    <property type="term" value="C:U2-type precatalytic spliceosome"/>
    <property type="evidence" value="ECO:0000250"/>
    <property type="project" value="UniProtKB"/>
</dbReference>
<dbReference type="GO" id="GO:0046540">
    <property type="term" value="C:U4/U6 x U5 tri-snRNP complex"/>
    <property type="evidence" value="ECO:0000250"/>
    <property type="project" value="UniProtKB"/>
</dbReference>
<dbReference type="GO" id="GO:0005690">
    <property type="term" value="C:U4atac snRNP"/>
    <property type="evidence" value="ECO:0000250"/>
    <property type="project" value="UniProtKB"/>
</dbReference>
<dbReference type="GO" id="GO:0030622">
    <property type="term" value="F:U4atac snRNA binding"/>
    <property type="evidence" value="ECO:0000250"/>
    <property type="project" value="UniProtKB"/>
</dbReference>
<dbReference type="GO" id="GO:0000398">
    <property type="term" value="P:mRNA splicing, via spliceosome"/>
    <property type="evidence" value="ECO:0000250"/>
    <property type="project" value="UniProtKB"/>
</dbReference>
<dbReference type="GO" id="GO:0042274">
    <property type="term" value="P:ribosomal small subunit biogenesis"/>
    <property type="evidence" value="ECO:0000250"/>
    <property type="project" value="UniProtKB"/>
</dbReference>
<dbReference type="CDD" id="cd21104">
    <property type="entry name" value="SNU13"/>
    <property type="match status" value="1"/>
</dbReference>
<dbReference type="FunFam" id="3.30.1330.30:FF:000002">
    <property type="entry name" value="NHP2-like protein 1 homolog"/>
    <property type="match status" value="1"/>
</dbReference>
<dbReference type="Gene3D" id="3.30.1330.30">
    <property type="match status" value="1"/>
</dbReference>
<dbReference type="InterPro" id="IPR050257">
    <property type="entry name" value="eL8/uL1-like"/>
</dbReference>
<dbReference type="InterPro" id="IPR002415">
    <property type="entry name" value="H/ACA_rnp_Nhp2-like"/>
</dbReference>
<dbReference type="InterPro" id="IPR029064">
    <property type="entry name" value="Ribosomal_eL30-like_sf"/>
</dbReference>
<dbReference type="InterPro" id="IPR004037">
    <property type="entry name" value="Ribosomal_eL8-like_CS"/>
</dbReference>
<dbReference type="InterPro" id="IPR004038">
    <property type="entry name" value="Ribosomal_eL8/eL30/eS12/Gad45"/>
</dbReference>
<dbReference type="InterPro" id="IPR018492">
    <property type="entry name" value="Ribosomal_eL8/Nhp2"/>
</dbReference>
<dbReference type="PANTHER" id="PTHR23105">
    <property type="entry name" value="RIBOSOMAL PROTEIN L7AE FAMILY MEMBER"/>
    <property type="match status" value="1"/>
</dbReference>
<dbReference type="Pfam" id="PF01248">
    <property type="entry name" value="Ribosomal_L7Ae"/>
    <property type="match status" value="1"/>
</dbReference>
<dbReference type="PRINTS" id="PR00881">
    <property type="entry name" value="L7ARS6FAMILY"/>
</dbReference>
<dbReference type="PRINTS" id="PR00883">
    <property type="entry name" value="NUCLEARHMG"/>
</dbReference>
<dbReference type="SUPFAM" id="SSF55315">
    <property type="entry name" value="L30e-like"/>
    <property type="match status" value="1"/>
</dbReference>
<dbReference type="PROSITE" id="PS01082">
    <property type="entry name" value="RIBOSOMAL_L7AE"/>
    <property type="match status" value="1"/>
</dbReference>
<sequence>MTEPEVNPKAYPLADAQLTKTLLDLVQQAANYKQLRKGANEATKTLNRGIAEFIVMAADAEPLEIILHLPLLCEDKNVPYVFVRSKQALGRACGVSRPVIACAVTIKEGSQLKPQIQSLQQSIERLLV</sequence>
<accession>Q6P8E9</accession>
<comment type="function">
    <text evidence="1">Part of the small subunit (SSU) processome, first precursor of the small eukaryotic ribosomal subunit. During the assembly of the SSU processome in the nucleolus, many ribosome biogenesis factors, an RNA chaperone and ribosomal proteins associate with the nascent pre-rRNA and work in concert to generate RNA folding, modifications, rearrangements and cleavage as well as targeted degradation of pre-ribosomal RNA by the RNA exosome. Involved in pre-mRNA splicing as component of the spliceosome. Binds to the 5'-stem-loop of U4 snRNA and thereby contributes to spliceosome assembly. The protein undergoes a conformational change upon RNA-binding. Core component of box C/D small nucleolar ribonucleoprotein (snoRNP) complexes that function in methylation of multiple sites on ribosomal RNAs (rRNAs) and messenger RNAs (mRNAs) (By similarity).</text>
</comment>
<comment type="subunit">
    <text evidence="1">Identified in the spliceosome B complex. Component of the U4/U6-U5 tri-snRNP complex. Part of the small subunit (SSU) processome, composed of more than 70 proteins and the RNA chaperone small nucleolar RNA (snoRNA) U3 (By similarity).</text>
</comment>
<comment type="subcellular location">
    <subcellularLocation>
        <location evidence="1">Nucleus</location>
    </subcellularLocation>
    <subcellularLocation>
        <location evidence="1">Nucleus</location>
        <location evidence="1">Nucleolus</location>
    </subcellularLocation>
</comment>
<comment type="similarity">
    <text evidence="2">Belongs to the eukaryotic ribosomal protein eL8 family.</text>
</comment>
<proteinExistence type="evidence at transcript level"/>
<keyword id="KW-0507">mRNA processing</keyword>
<keyword id="KW-0508">mRNA splicing</keyword>
<keyword id="KW-0539">Nucleus</keyword>
<keyword id="KW-1185">Reference proteome</keyword>
<keyword id="KW-0687">Ribonucleoprotein</keyword>
<keyword id="KW-0694">RNA-binding</keyword>
<keyword id="KW-0747">Spliceosome</keyword>